<feature type="chain" id="PRO_0000366545" description="Ribosomal RNA large subunit methyltransferase G">
    <location>
        <begin position="1"/>
        <end position="395"/>
    </location>
</feature>
<reference key="1">
    <citation type="submission" date="2008-04" db="EMBL/GenBank/DDBJ databases">
        <title>Complete sequence of Yersinia pseudotuberculosis PB1/+.</title>
        <authorList>
            <person name="Copeland A."/>
            <person name="Lucas S."/>
            <person name="Lapidus A."/>
            <person name="Glavina del Rio T."/>
            <person name="Dalin E."/>
            <person name="Tice H."/>
            <person name="Bruce D."/>
            <person name="Goodwin L."/>
            <person name="Pitluck S."/>
            <person name="Munk A.C."/>
            <person name="Brettin T."/>
            <person name="Detter J.C."/>
            <person name="Han C."/>
            <person name="Tapia R."/>
            <person name="Schmutz J."/>
            <person name="Larimer F."/>
            <person name="Land M."/>
            <person name="Hauser L."/>
            <person name="Challacombe J.F."/>
            <person name="Green L."/>
            <person name="Lindler L.E."/>
            <person name="Nikolich M.P."/>
            <person name="Richardson P."/>
        </authorList>
    </citation>
    <scope>NUCLEOTIDE SEQUENCE [LARGE SCALE GENOMIC DNA]</scope>
    <source>
        <strain>PB1/+</strain>
    </source>
</reference>
<evidence type="ECO:0000255" key="1">
    <source>
        <dbReference type="HAMAP-Rule" id="MF_01859"/>
    </source>
</evidence>
<protein>
    <recommendedName>
        <fullName evidence="1">Ribosomal RNA large subunit methyltransferase G</fullName>
        <ecNumber evidence="1">2.1.1.174</ecNumber>
    </recommendedName>
    <alternativeName>
        <fullName evidence="1">23S rRNA m2G1835 methyltransferase</fullName>
    </alternativeName>
    <alternativeName>
        <fullName evidence="1">rRNA (guanine-N(2)-)-methyltransferase RlmG</fullName>
    </alternativeName>
</protein>
<accession>B2K3B8</accession>
<comment type="function">
    <text evidence="1">Specifically methylates the guanine in position 1835 (m2G1835) of 23S rRNA.</text>
</comment>
<comment type="catalytic activity">
    <reaction evidence="1">
        <text>guanosine(1835) in 23S rRNA + S-adenosyl-L-methionine = N(2)-methylguanosine(1835) in 23S rRNA + S-adenosyl-L-homocysteine + H(+)</text>
        <dbReference type="Rhea" id="RHEA:42744"/>
        <dbReference type="Rhea" id="RHEA-COMP:10217"/>
        <dbReference type="Rhea" id="RHEA-COMP:10218"/>
        <dbReference type="ChEBI" id="CHEBI:15378"/>
        <dbReference type="ChEBI" id="CHEBI:57856"/>
        <dbReference type="ChEBI" id="CHEBI:59789"/>
        <dbReference type="ChEBI" id="CHEBI:74269"/>
        <dbReference type="ChEBI" id="CHEBI:74481"/>
        <dbReference type="EC" id="2.1.1.174"/>
    </reaction>
</comment>
<comment type="subcellular location">
    <subcellularLocation>
        <location evidence="1">Cytoplasm</location>
    </subcellularLocation>
</comment>
<comment type="similarity">
    <text evidence="1">Belongs to the methyltransferase superfamily. RlmG family.</text>
</comment>
<keyword id="KW-0963">Cytoplasm</keyword>
<keyword id="KW-0489">Methyltransferase</keyword>
<keyword id="KW-0698">rRNA processing</keyword>
<keyword id="KW-0949">S-adenosyl-L-methionine</keyword>
<keyword id="KW-0808">Transferase</keyword>
<sequence>MSQLDLGTQSLELERFPPQENSNTLQAWEAADEYLLQNIDLSQIDGRPVLVFNDQFGTLACALHAYRPFSSSDSYMSQLATAHNLRLNHLDESAVTLLSSVDDLPEAPKLVVIKIPKALALLEHQLRALRRVVAPDTVIIAGAKSRDVHNSTLQLFEKILGPTKTTLAWKKARLIHCEVADIPLADAPETIDWPLPNTDYIIHNHANVFSRNNLDIGARFFMEILPYDVTGKIADLGCGNGVVGLIALEQNPLAEMLFVDESYMAVASSELNITVNRPQDLSRCEFMVSHGLAGVERESLQLVLCNPPFHQQHAVSDHVAWQMFCDAKRCLKAGGELMIVGNRHLDYFHKLKRLFGNCETLDSNQKFMVLKSVKQASSRSEGGGSGSLDMSYSDF</sequence>
<dbReference type="EC" id="2.1.1.174" evidence="1"/>
<dbReference type="EMBL" id="CP001048">
    <property type="protein sequence ID" value="ACC90608.1"/>
    <property type="molecule type" value="Genomic_DNA"/>
</dbReference>
<dbReference type="RefSeq" id="WP_002210402.1">
    <property type="nucleotide sequence ID" value="NZ_CP009780.1"/>
</dbReference>
<dbReference type="SMR" id="B2K3B8"/>
<dbReference type="GeneID" id="57974028"/>
<dbReference type="KEGG" id="ypb:YPTS_3655"/>
<dbReference type="PATRIC" id="fig|502801.10.peg.3104"/>
<dbReference type="GO" id="GO:0005737">
    <property type="term" value="C:cytoplasm"/>
    <property type="evidence" value="ECO:0007669"/>
    <property type="project" value="UniProtKB-SubCell"/>
</dbReference>
<dbReference type="GO" id="GO:0052916">
    <property type="term" value="F:23S rRNA (guanine(1835)-N(2))-methyltransferase activity"/>
    <property type="evidence" value="ECO:0007669"/>
    <property type="project" value="UniProtKB-EC"/>
</dbReference>
<dbReference type="GO" id="GO:0003676">
    <property type="term" value="F:nucleic acid binding"/>
    <property type="evidence" value="ECO:0007669"/>
    <property type="project" value="InterPro"/>
</dbReference>
<dbReference type="CDD" id="cd02440">
    <property type="entry name" value="AdoMet_MTases"/>
    <property type="match status" value="1"/>
</dbReference>
<dbReference type="Gene3D" id="3.40.50.150">
    <property type="entry name" value="Vaccinia Virus protein VP39"/>
    <property type="match status" value="2"/>
</dbReference>
<dbReference type="HAMAP" id="MF_01859">
    <property type="entry name" value="23SrRNA_methyltr_G"/>
    <property type="match status" value="1"/>
</dbReference>
<dbReference type="InterPro" id="IPR002052">
    <property type="entry name" value="DNA_methylase_N6_adenine_CS"/>
</dbReference>
<dbReference type="InterPro" id="IPR017237">
    <property type="entry name" value="rRNA_m2G-MeTrfase_RlmG"/>
</dbReference>
<dbReference type="InterPro" id="IPR046977">
    <property type="entry name" value="RsmC/RlmG"/>
</dbReference>
<dbReference type="InterPro" id="IPR029063">
    <property type="entry name" value="SAM-dependent_MTases_sf"/>
</dbReference>
<dbReference type="InterPro" id="IPR007848">
    <property type="entry name" value="Small_mtfrase_dom"/>
</dbReference>
<dbReference type="NCBIfam" id="NF011577">
    <property type="entry name" value="PRK15001.1"/>
    <property type="match status" value="1"/>
</dbReference>
<dbReference type="PANTHER" id="PTHR47816:SF5">
    <property type="entry name" value="RIBOSOMAL RNA LARGE SUBUNIT METHYLTRANSFERASE G"/>
    <property type="match status" value="1"/>
</dbReference>
<dbReference type="PANTHER" id="PTHR47816">
    <property type="entry name" value="RIBOSOMAL RNA SMALL SUBUNIT METHYLTRANSFERASE C"/>
    <property type="match status" value="1"/>
</dbReference>
<dbReference type="Pfam" id="PF05175">
    <property type="entry name" value="MTS"/>
    <property type="match status" value="1"/>
</dbReference>
<dbReference type="PIRSF" id="PIRSF037565">
    <property type="entry name" value="RRNA_m2G_Mtase_RsmD_prd"/>
    <property type="match status" value="1"/>
</dbReference>
<dbReference type="SUPFAM" id="SSF53335">
    <property type="entry name" value="S-adenosyl-L-methionine-dependent methyltransferases"/>
    <property type="match status" value="1"/>
</dbReference>
<gene>
    <name evidence="1" type="primary">rlmG</name>
    <name type="ordered locus">YPTS_3655</name>
</gene>
<organism>
    <name type="scientific">Yersinia pseudotuberculosis serotype IB (strain PB1/+)</name>
    <dbReference type="NCBI Taxonomy" id="502801"/>
    <lineage>
        <taxon>Bacteria</taxon>
        <taxon>Pseudomonadati</taxon>
        <taxon>Pseudomonadota</taxon>
        <taxon>Gammaproteobacteria</taxon>
        <taxon>Enterobacterales</taxon>
        <taxon>Yersiniaceae</taxon>
        <taxon>Yersinia</taxon>
    </lineage>
</organism>
<proteinExistence type="inferred from homology"/>
<name>RLMG_YERPB</name>